<gene>
    <name evidence="1" type="primary">rplS</name>
    <name type="ordered locus">CTL0283</name>
</gene>
<organism>
    <name type="scientific">Chlamydia trachomatis serovar L2 (strain ATCC VR-902B / DSM 19102 / 434/Bu)</name>
    <dbReference type="NCBI Taxonomy" id="471472"/>
    <lineage>
        <taxon>Bacteria</taxon>
        <taxon>Pseudomonadati</taxon>
        <taxon>Chlamydiota</taxon>
        <taxon>Chlamydiia</taxon>
        <taxon>Chlamydiales</taxon>
        <taxon>Chlamydiaceae</taxon>
        <taxon>Chlamydia/Chlamydophila group</taxon>
        <taxon>Chlamydia</taxon>
    </lineage>
</organism>
<keyword id="KW-0687">Ribonucleoprotein</keyword>
<keyword id="KW-0689">Ribosomal protein</keyword>
<feature type="chain" id="PRO_1000193804" description="Large ribosomal subunit protein bL19">
    <location>
        <begin position="1"/>
        <end position="121"/>
    </location>
</feature>
<dbReference type="EMBL" id="AM884176">
    <property type="protein sequence ID" value="CAP03722.1"/>
    <property type="molecule type" value="Genomic_DNA"/>
</dbReference>
<dbReference type="RefSeq" id="WP_009871375.1">
    <property type="nucleotide sequence ID" value="NC_010287.1"/>
</dbReference>
<dbReference type="RefSeq" id="YP_001654367.1">
    <property type="nucleotide sequence ID" value="NC_010287.1"/>
</dbReference>
<dbReference type="SMR" id="B0B9D5"/>
<dbReference type="KEGG" id="ctb:CTL0283"/>
<dbReference type="PATRIC" id="fig|471472.4.peg.307"/>
<dbReference type="HOGENOM" id="CLU_103507_2_1_0"/>
<dbReference type="Proteomes" id="UP001154402">
    <property type="component" value="Chromosome"/>
</dbReference>
<dbReference type="GO" id="GO:0022625">
    <property type="term" value="C:cytosolic large ribosomal subunit"/>
    <property type="evidence" value="ECO:0007669"/>
    <property type="project" value="TreeGrafter"/>
</dbReference>
<dbReference type="GO" id="GO:0003735">
    <property type="term" value="F:structural constituent of ribosome"/>
    <property type="evidence" value="ECO:0007669"/>
    <property type="project" value="InterPro"/>
</dbReference>
<dbReference type="GO" id="GO:0006412">
    <property type="term" value="P:translation"/>
    <property type="evidence" value="ECO:0007669"/>
    <property type="project" value="UniProtKB-UniRule"/>
</dbReference>
<dbReference type="FunFam" id="2.30.30.790:FF:000013">
    <property type="entry name" value="50S ribosomal protein L19"/>
    <property type="match status" value="1"/>
</dbReference>
<dbReference type="Gene3D" id="2.30.30.790">
    <property type="match status" value="1"/>
</dbReference>
<dbReference type="HAMAP" id="MF_00402">
    <property type="entry name" value="Ribosomal_bL19"/>
    <property type="match status" value="1"/>
</dbReference>
<dbReference type="InterPro" id="IPR001857">
    <property type="entry name" value="Ribosomal_bL19"/>
</dbReference>
<dbReference type="InterPro" id="IPR018257">
    <property type="entry name" value="Ribosomal_bL19_CS"/>
</dbReference>
<dbReference type="InterPro" id="IPR038657">
    <property type="entry name" value="Ribosomal_bL19_sf"/>
</dbReference>
<dbReference type="InterPro" id="IPR008991">
    <property type="entry name" value="Translation_prot_SH3-like_sf"/>
</dbReference>
<dbReference type="NCBIfam" id="TIGR01024">
    <property type="entry name" value="rplS_bact"/>
    <property type="match status" value="1"/>
</dbReference>
<dbReference type="PANTHER" id="PTHR15680:SF9">
    <property type="entry name" value="LARGE RIBOSOMAL SUBUNIT PROTEIN BL19M"/>
    <property type="match status" value="1"/>
</dbReference>
<dbReference type="PANTHER" id="PTHR15680">
    <property type="entry name" value="RIBOSOMAL PROTEIN L19"/>
    <property type="match status" value="1"/>
</dbReference>
<dbReference type="Pfam" id="PF01245">
    <property type="entry name" value="Ribosomal_L19"/>
    <property type="match status" value="1"/>
</dbReference>
<dbReference type="PIRSF" id="PIRSF002191">
    <property type="entry name" value="Ribosomal_L19"/>
    <property type="match status" value="1"/>
</dbReference>
<dbReference type="PRINTS" id="PR00061">
    <property type="entry name" value="RIBOSOMALL19"/>
</dbReference>
<dbReference type="SUPFAM" id="SSF50104">
    <property type="entry name" value="Translation proteins SH3-like domain"/>
    <property type="match status" value="1"/>
</dbReference>
<dbReference type="PROSITE" id="PS01015">
    <property type="entry name" value="RIBOSOMAL_L19"/>
    <property type="match status" value="1"/>
</dbReference>
<proteinExistence type="inferred from homology"/>
<comment type="function">
    <text evidence="1">This protein is located at the 30S-50S ribosomal subunit interface and may play a role in the structure and function of the aminoacyl-tRNA binding site.</text>
</comment>
<comment type="similarity">
    <text evidence="1">Belongs to the bacterial ribosomal protein bL19 family.</text>
</comment>
<sequence>MGNLIKELQDEQCRTDLADFCVGDTIRVATNISEGGKERVQVFQGTVMARKGGGAGETVSLHRVAYGEGMEKSFLLNSPKIVSIEVVKRGKVSRARLFYLRGKTGKAAKVKELIGSRAAKK</sequence>
<protein>
    <recommendedName>
        <fullName evidence="1">Large ribosomal subunit protein bL19</fullName>
    </recommendedName>
    <alternativeName>
        <fullName evidence="2">50S ribosomal protein L19</fullName>
    </alternativeName>
</protein>
<reference key="1">
    <citation type="journal article" date="2008" name="Genome Res.">
        <title>Chlamydia trachomatis: genome sequence analysis of lymphogranuloma venereum isolates.</title>
        <authorList>
            <person name="Thomson N.R."/>
            <person name="Holden M.T.G."/>
            <person name="Carder C."/>
            <person name="Lennard N."/>
            <person name="Lockey S.J."/>
            <person name="Marsh P."/>
            <person name="Skipp P."/>
            <person name="O'Connor C.D."/>
            <person name="Goodhead I."/>
            <person name="Norbertzcak H."/>
            <person name="Harris B."/>
            <person name="Ormond D."/>
            <person name="Rance R."/>
            <person name="Quail M.A."/>
            <person name="Parkhill J."/>
            <person name="Stephens R.S."/>
            <person name="Clarke I.N."/>
        </authorList>
    </citation>
    <scope>NUCLEOTIDE SEQUENCE [LARGE SCALE GENOMIC DNA]</scope>
    <source>
        <strain>ATCC VR-902B / DSM 19102 / 434/Bu</strain>
    </source>
</reference>
<name>RL19_CHLT2</name>
<evidence type="ECO:0000255" key="1">
    <source>
        <dbReference type="HAMAP-Rule" id="MF_00402"/>
    </source>
</evidence>
<evidence type="ECO:0000305" key="2"/>
<accession>B0B9D5</accession>